<reference key="1">
    <citation type="journal article" date="1991" name="Plant Mol. Biol.">
        <title>A maize gene expressed during embryogenesis is abscisic acid-inducible and highly conserved.</title>
        <authorList>
            <person name="Williams B."/>
            <person name="Tsang A."/>
        </authorList>
    </citation>
    <scope>NUCLEOTIDE SEQUENCE [MRNA]</scope>
    <source>
        <strain>cv. CO255</strain>
        <tissue>Embryo</tissue>
    </source>
</reference>
<organism>
    <name type="scientific">Zea mays</name>
    <name type="common">Maize</name>
    <dbReference type="NCBI Taxonomy" id="4577"/>
    <lineage>
        <taxon>Eukaryota</taxon>
        <taxon>Viridiplantae</taxon>
        <taxon>Streptophyta</taxon>
        <taxon>Embryophyta</taxon>
        <taxon>Tracheophyta</taxon>
        <taxon>Spermatophyta</taxon>
        <taxon>Magnoliopsida</taxon>
        <taxon>Liliopsida</taxon>
        <taxon>Poales</taxon>
        <taxon>Poaceae</taxon>
        <taxon>PACMAD clade</taxon>
        <taxon>Panicoideae</taxon>
        <taxon>Andropogonodae</taxon>
        <taxon>Andropogoneae</taxon>
        <taxon>Tripsacinae</taxon>
        <taxon>Zea</taxon>
    </lineage>
</organism>
<accession>P46517</accession>
<evidence type="ECO:0000256" key="1">
    <source>
        <dbReference type="SAM" id="MobiDB-lite"/>
    </source>
</evidence>
<evidence type="ECO:0000305" key="2"/>
<proteinExistence type="evidence at transcript level"/>
<feature type="chain" id="PRO_0000185685" description="Late embryogenesis abundant protein EMB564">
    <location>
        <begin position="1"/>
        <end position="91"/>
    </location>
</feature>
<feature type="region of interest" description="Disordered" evidence="1">
    <location>
        <begin position="1"/>
        <end position="91"/>
    </location>
</feature>
<feature type="compositionally biased region" description="Basic and acidic residues" evidence="1">
    <location>
        <begin position="1"/>
        <end position="19"/>
    </location>
</feature>
<feature type="compositionally biased region" description="Basic and acidic residues" evidence="1">
    <location>
        <begin position="32"/>
        <end position="51"/>
    </location>
</feature>
<dbReference type="EMBL" id="X55388">
    <property type="protein sequence ID" value="CAA39063.1"/>
    <property type="molecule type" value="mRNA"/>
</dbReference>
<dbReference type="PIR" id="S16249">
    <property type="entry name" value="S16249"/>
</dbReference>
<dbReference type="BioGRID" id="951601">
    <property type="interactions" value="1"/>
</dbReference>
<dbReference type="FunCoup" id="P46517">
    <property type="interactions" value="3553"/>
</dbReference>
<dbReference type="STRING" id="4577.P46517"/>
<dbReference type="PaxDb" id="4577-AC233879.1_FGP002"/>
<dbReference type="MaizeGDB" id="120720"/>
<dbReference type="eggNOG" id="ENOG502S40U">
    <property type="taxonomic scope" value="Eukaryota"/>
</dbReference>
<dbReference type="InParanoid" id="P46517"/>
<dbReference type="Proteomes" id="UP000007305">
    <property type="component" value="Unplaced"/>
</dbReference>
<dbReference type="ExpressionAtlas" id="P46517">
    <property type="expression patterns" value="baseline and differential"/>
</dbReference>
<dbReference type="GO" id="GO:0009737">
    <property type="term" value="P:response to abscisic acid"/>
    <property type="evidence" value="ECO:0000318"/>
    <property type="project" value="GO_Central"/>
</dbReference>
<dbReference type="InterPro" id="IPR038956">
    <property type="entry name" value="LEA_5"/>
</dbReference>
<dbReference type="InterPro" id="IPR022377">
    <property type="entry name" value="Sm_Hydphi_plant_seed_CS"/>
</dbReference>
<dbReference type="InterPro" id="IPR000389">
    <property type="entry name" value="Small_hydrophilic_seed_prot"/>
</dbReference>
<dbReference type="PANTHER" id="PTHR34671">
    <property type="entry name" value="EM-LIKE PROTEIN GEA1"/>
    <property type="match status" value="1"/>
</dbReference>
<dbReference type="PANTHER" id="PTHR34671:SF16">
    <property type="entry name" value="LATE EMBRYOGENESIS ABUNDANT PROTEIN EMB564"/>
    <property type="match status" value="1"/>
</dbReference>
<dbReference type="Pfam" id="PF00477">
    <property type="entry name" value="LEA_5"/>
    <property type="match status" value="1"/>
</dbReference>
<dbReference type="PROSITE" id="PS00431">
    <property type="entry name" value="SMALL_HYDR_PLANT_SEED"/>
    <property type="match status" value="1"/>
</dbReference>
<comment type="function">
    <text>LEA proteins are late embryonic proteins abundant in higher plant seed embryos. They may play an essential role in seed survival and in controlling water exchanges during seed desiccation and imbibition.</text>
</comment>
<comment type="induction">
    <text>By abscisic acid (ABA) and osmotic stress.</text>
</comment>
<comment type="similarity">
    <text evidence="2">Belongs to the small hydrophilic plant seed protein family.</text>
</comment>
<protein>
    <recommendedName>
        <fullName>Late embryogenesis abundant protein EMB564</fullName>
    </recommendedName>
</protein>
<sequence length="91" mass="9684">MASGQESRKELDRKAREGETVVPGGTGGKSVEAQEHLAEGRSRGGQTRREQLGQQGYSEMGKKGGLSTTDESGGERAAREGVTIDESKFTK</sequence>
<keyword id="KW-1185">Reference proteome</keyword>
<keyword id="KW-0346">Stress response</keyword>
<name>EMB5_MAIZE</name>